<dbReference type="EC" id="1.13.11.68"/>
<dbReference type="EMBL" id="AL663000">
    <property type="protein sequence ID" value="CAD41601.3"/>
    <property type="molecule type" value="Genomic_DNA"/>
</dbReference>
<dbReference type="EMBL" id="AP008210">
    <property type="protein sequence ID" value="BAF15405.1"/>
    <property type="molecule type" value="Genomic_DNA"/>
</dbReference>
<dbReference type="EMBL" id="AP014960">
    <property type="protein sequence ID" value="BAS90374.1"/>
    <property type="molecule type" value="Genomic_DNA"/>
</dbReference>
<dbReference type="EMBL" id="CM000141">
    <property type="protein sequence ID" value="EAZ31551.1"/>
    <property type="molecule type" value="Genomic_DNA"/>
</dbReference>
<dbReference type="EMBL" id="AK109771">
    <property type="status" value="NOT_ANNOTATED_CDS"/>
    <property type="molecule type" value="mRNA"/>
</dbReference>
<dbReference type="RefSeq" id="XP_015637185.1">
    <property type="nucleotide sequence ID" value="XM_015781699.1"/>
</dbReference>
<dbReference type="SMR" id="Q7XU29"/>
<dbReference type="FunCoup" id="Q7XU29">
    <property type="interactions" value="25"/>
</dbReference>
<dbReference type="STRING" id="39947.Q7XU29"/>
<dbReference type="PaxDb" id="39947-Q7XU29"/>
<dbReference type="EnsemblPlants" id="Os04t0550600-01">
    <property type="protein sequence ID" value="Os04t0550600-01"/>
    <property type="gene ID" value="Os04g0550600"/>
</dbReference>
<dbReference type="Gramene" id="Os04t0550600-01">
    <property type="protein sequence ID" value="Os04t0550600-01"/>
    <property type="gene ID" value="Os04g0550600"/>
</dbReference>
<dbReference type="KEGG" id="dosa:Os04g0550600"/>
<dbReference type="eggNOG" id="KOG1285">
    <property type="taxonomic scope" value="Eukaryota"/>
</dbReference>
<dbReference type="HOGENOM" id="CLU_016472_6_1_1"/>
<dbReference type="InParanoid" id="Q7XU29"/>
<dbReference type="OMA" id="PYEVDPR"/>
<dbReference type="OrthoDB" id="1069523at2759"/>
<dbReference type="PlantReactome" id="R-OSA-5367729">
    <property type="pathway name" value="Strigolactone biosynthesis"/>
</dbReference>
<dbReference type="Proteomes" id="UP000000763">
    <property type="component" value="Chromosome 4"/>
</dbReference>
<dbReference type="Proteomes" id="UP000007752">
    <property type="component" value="Chromosome 4"/>
</dbReference>
<dbReference type="Proteomes" id="UP000059680">
    <property type="component" value="Chromosome 4"/>
</dbReference>
<dbReference type="GO" id="GO:0009570">
    <property type="term" value="C:chloroplast stroma"/>
    <property type="evidence" value="ECO:0000318"/>
    <property type="project" value="GO_Central"/>
</dbReference>
<dbReference type="GO" id="GO:0102395">
    <property type="term" value="F:9-cis-beta-carotene 9',10'-cleavage oxygenase activity"/>
    <property type="evidence" value="ECO:0007669"/>
    <property type="project" value="UniProtKB-EC"/>
</dbReference>
<dbReference type="GO" id="GO:0045549">
    <property type="term" value="F:9-cis-epoxycarotenoid dioxygenase activity"/>
    <property type="evidence" value="ECO:0000318"/>
    <property type="project" value="GO_Central"/>
</dbReference>
<dbReference type="GO" id="GO:0046872">
    <property type="term" value="F:metal ion binding"/>
    <property type="evidence" value="ECO:0007669"/>
    <property type="project" value="UniProtKB-KW"/>
</dbReference>
<dbReference type="GO" id="GO:0016702">
    <property type="term" value="F:oxidoreductase activity, acting on single donors with incorporation of molecular oxygen, incorporation of two atoms of oxygen"/>
    <property type="evidence" value="ECO:0000314"/>
    <property type="project" value="UniProtKB"/>
</dbReference>
<dbReference type="GO" id="GO:0016121">
    <property type="term" value="P:carotene catabolic process"/>
    <property type="evidence" value="ECO:0000314"/>
    <property type="project" value="UniProtKB"/>
</dbReference>
<dbReference type="GO" id="GO:0009733">
    <property type="term" value="P:response to auxin"/>
    <property type="evidence" value="ECO:0000315"/>
    <property type="project" value="Gramene"/>
</dbReference>
<dbReference type="GO" id="GO:0010223">
    <property type="term" value="P:secondary shoot formation"/>
    <property type="evidence" value="ECO:0000315"/>
    <property type="project" value="Gramene"/>
</dbReference>
<dbReference type="GO" id="GO:1901601">
    <property type="term" value="P:strigolactone biosynthetic process"/>
    <property type="evidence" value="ECO:0000314"/>
    <property type="project" value="UniProtKB"/>
</dbReference>
<dbReference type="InterPro" id="IPR004294">
    <property type="entry name" value="Carotenoid_Oase"/>
</dbReference>
<dbReference type="PANTHER" id="PTHR10543">
    <property type="entry name" value="BETA-CAROTENE DIOXYGENASE"/>
    <property type="match status" value="1"/>
</dbReference>
<dbReference type="PANTHER" id="PTHR10543:SF37">
    <property type="entry name" value="CAROTENOID CLEAVAGE DIOXYGENASE 7, CHLOROPLASTIC"/>
    <property type="match status" value="1"/>
</dbReference>
<dbReference type="Pfam" id="PF03055">
    <property type="entry name" value="RPE65"/>
    <property type="match status" value="1"/>
</dbReference>
<accession>Q7XU29</accession>
<accession>A0A0P0WDK3</accession>
<comment type="function">
    <text evidence="4">Involved in strigolactones biosynthesis by cleaving asymmetrically a variety of linear and cyclic carotenoids at the 9-10 double bond. Produces one C(13) beta-ionone and the C(27) 10'-apo-beta-carotenal. Strigolactones are hormones that inhibit tillering and shoot branching through the MAX-dependent pathway, contribute to the regulation of shoot architectural response to phosphate-limiting conditions and function as rhizosphere signal that stimulates hyphal branching of arbuscular mycorrhizal fungi and trigger seed germination of root parasitic weeds. Can rescue the phenotype in the Arabidopsis max3 mutant.</text>
</comment>
<comment type="catalytic activity">
    <reaction evidence="7">
        <text>9-cis-beta-carotene + O2 = 9-cis-10'-apo-beta-carotenal + beta-ionone</text>
        <dbReference type="Rhea" id="RHEA:34399"/>
        <dbReference type="ChEBI" id="CHEBI:15379"/>
        <dbReference type="ChEBI" id="CHEBI:32325"/>
        <dbReference type="ChEBI" id="CHEBI:67188"/>
        <dbReference type="ChEBI" id="CHEBI:67192"/>
        <dbReference type="EC" id="1.13.11.68"/>
    </reaction>
</comment>
<comment type="cofactor">
    <cofactor evidence="1">
        <name>Fe(2+)</name>
        <dbReference type="ChEBI" id="CHEBI:29033"/>
    </cofactor>
    <text evidence="1">Binds 1 Fe(2+) ion per subunit.</text>
</comment>
<comment type="subcellular location">
    <subcellularLocation>
        <location evidence="1">Plastid</location>
        <location evidence="1">Chloroplast</location>
    </subcellularLocation>
</comment>
<comment type="tissue specificity">
    <text evidence="4">Expressed in vascular bundles of roots, leaves, stems and panicles.</text>
</comment>
<comment type="induction">
    <text evidence="4">By auxin.</text>
</comment>
<comment type="disruption phenotype">
    <text evidence="3 4 5 6 8">Dwarf phenotype with increased branching and tiller number, and strong reduction of the root levels of strigolactones.</text>
</comment>
<comment type="miscellaneous">
    <text evidence="10">The branching phenotypes of the ccd7/max3 and ccd8b/max4 mutants can be rescued by exogenous treatment with the synthetic strigolactone analogs GR24 and 4BD.</text>
</comment>
<comment type="similarity">
    <text evidence="9">Belongs to the carotenoid oxygenase family.</text>
</comment>
<reference key="1">
    <citation type="journal article" date="2002" name="Nature">
        <title>Sequence and analysis of rice chromosome 4.</title>
        <authorList>
            <person name="Feng Q."/>
            <person name="Zhang Y."/>
            <person name="Hao P."/>
            <person name="Wang S."/>
            <person name="Fu G."/>
            <person name="Huang Y."/>
            <person name="Li Y."/>
            <person name="Zhu J."/>
            <person name="Liu Y."/>
            <person name="Hu X."/>
            <person name="Jia P."/>
            <person name="Zhang Y."/>
            <person name="Zhao Q."/>
            <person name="Ying K."/>
            <person name="Yu S."/>
            <person name="Tang Y."/>
            <person name="Weng Q."/>
            <person name="Zhang L."/>
            <person name="Lu Y."/>
            <person name="Mu J."/>
            <person name="Lu Y."/>
            <person name="Zhang L.S."/>
            <person name="Yu Z."/>
            <person name="Fan D."/>
            <person name="Liu X."/>
            <person name="Lu T."/>
            <person name="Li C."/>
            <person name="Wu Y."/>
            <person name="Sun T."/>
            <person name="Lei H."/>
            <person name="Li T."/>
            <person name="Hu H."/>
            <person name="Guan J."/>
            <person name="Wu M."/>
            <person name="Zhang R."/>
            <person name="Zhou B."/>
            <person name="Chen Z."/>
            <person name="Chen L."/>
            <person name="Jin Z."/>
            <person name="Wang R."/>
            <person name="Yin H."/>
            <person name="Cai Z."/>
            <person name="Ren S."/>
            <person name="Lv G."/>
            <person name="Gu W."/>
            <person name="Zhu G."/>
            <person name="Tu Y."/>
            <person name="Jia J."/>
            <person name="Zhang Y."/>
            <person name="Chen J."/>
            <person name="Kang H."/>
            <person name="Chen X."/>
            <person name="Shao C."/>
            <person name="Sun Y."/>
            <person name="Hu Q."/>
            <person name="Zhang X."/>
            <person name="Zhang W."/>
            <person name="Wang L."/>
            <person name="Ding C."/>
            <person name="Sheng H."/>
            <person name="Gu J."/>
            <person name="Chen S."/>
            <person name="Ni L."/>
            <person name="Zhu F."/>
            <person name="Chen W."/>
            <person name="Lan L."/>
            <person name="Lai Y."/>
            <person name="Cheng Z."/>
            <person name="Gu M."/>
            <person name="Jiang J."/>
            <person name="Li J."/>
            <person name="Hong G."/>
            <person name="Xue Y."/>
            <person name="Han B."/>
        </authorList>
    </citation>
    <scope>NUCLEOTIDE SEQUENCE [LARGE SCALE GENOMIC DNA]</scope>
    <source>
        <strain>cv. Nipponbare</strain>
    </source>
</reference>
<reference key="2">
    <citation type="journal article" date="2005" name="Nature">
        <title>The map-based sequence of the rice genome.</title>
        <authorList>
            <consortium name="International rice genome sequencing project (IRGSP)"/>
        </authorList>
    </citation>
    <scope>NUCLEOTIDE SEQUENCE [LARGE SCALE GENOMIC DNA]</scope>
    <source>
        <strain>cv. Nipponbare</strain>
    </source>
</reference>
<reference key="3">
    <citation type="journal article" date="2008" name="Nucleic Acids Res.">
        <title>The rice annotation project database (RAP-DB): 2008 update.</title>
        <authorList>
            <consortium name="The rice annotation project (RAP)"/>
        </authorList>
    </citation>
    <scope>GENOME REANNOTATION</scope>
    <source>
        <strain>cv. Nipponbare</strain>
    </source>
</reference>
<reference key="4">
    <citation type="journal article" date="2013" name="Rice">
        <title>Improvement of the Oryza sativa Nipponbare reference genome using next generation sequence and optical map data.</title>
        <authorList>
            <person name="Kawahara Y."/>
            <person name="de la Bastide M."/>
            <person name="Hamilton J.P."/>
            <person name="Kanamori H."/>
            <person name="McCombie W.R."/>
            <person name="Ouyang S."/>
            <person name="Schwartz D.C."/>
            <person name="Tanaka T."/>
            <person name="Wu J."/>
            <person name="Zhou S."/>
            <person name="Childs K.L."/>
            <person name="Davidson R.M."/>
            <person name="Lin H."/>
            <person name="Quesada-Ocampo L."/>
            <person name="Vaillancourt B."/>
            <person name="Sakai H."/>
            <person name="Lee S.S."/>
            <person name="Kim J."/>
            <person name="Numa H."/>
            <person name="Itoh T."/>
            <person name="Buell C.R."/>
            <person name="Matsumoto T."/>
        </authorList>
    </citation>
    <scope>GENOME REANNOTATION</scope>
    <source>
        <strain>cv. Nipponbare</strain>
    </source>
</reference>
<reference key="5">
    <citation type="journal article" date="2005" name="PLoS Biol.">
        <title>The genomes of Oryza sativa: a history of duplications.</title>
        <authorList>
            <person name="Yu J."/>
            <person name="Wang J."/>
            <person name="Lin W."/>
            <person name="Li S."/>
            <person name="Li H."/>
            <person name="Zhou J."/>
            <person name="Ni P."/>
            <person name="Dong W."/>
            <person name="Hu S."/>
            <person name="Zeng C."/>
            <person name="Zhang J."/>
            <person name="Zhang Y."/>
            <person name="Li R."/>
            <person name="Xu Z."/>
            <person name="Li S."/>
            <person name="Li X."/>
            <person name="Zheng H."/>
            <person name="Cong L."/>
            <person name="Lin L."/>
            <person name="Yin J."/>
            <person name="Geng J."/>
            <person name="Li G."/>
            <person name="Shi J."/>
            <person name="Liu J."/>
            <person name="Lv H."/>
            <person name="Li J."/>
            <person name="Wang J."/>
            <person name="Deng Y."/>
            <person name="Ran L."/>
            <person name="Shi X."/>
            <person name="Wang X."/>
            <person name="Wu Q."/>
            <person name="Li C."/>
            <person name="Ren X."/>
            <person name="Wang J."/>
            <person name="Wang X."/>
            <person name="Li D."/>
            <person name="Liu D."/>
            <person name="Zhang X."/>
            <person name="Ji Z."/>
            <person name="Zhao W."/>
            <person name="Sun Y."/>
            <person name="Zhang Z."/>
            <person name="Bao J."/>
            <person name="Han Y."/>
            <person name="Dong L."/>
            <person name="Ji J."/>
            <person name="Chen P."/>
            <person name="Wu S."/>
            <person name="Liu J."/>
            <person name="Xiao Y."/>
            <person name="Bu D."/>
            <person name="Tan J."/>
            <person name="Yang L."/>
            <person name="Ye C."/>
            <person name="Zhang J."/>
            <person name="Xu J."/>
            <person name="Zhou Y."/>
            <person name="Yu Y."/>
            <person name="Zhang B."/>
            <person name="Zhuang S."/>
            <person name="Wei H."/>
            <person name="Liu B."/>
            <person name="Lei M."/>
            <person name="Yu H."/>
            <person name="Li Y."/>
            <person name="Xu H."/>
            <person name="Wei S."/>
            <person name="He X."/>
            <person name="Fang L."/>
            <person name="Zhang Z."/>
            <person name="Zhang Y."/>
            <person name="Huang X."/>
            <person name="Su Z."/>
            <person name="Tong W."/>
            <person name="Li J."/>
            <person name="Tong Z."/>
            <person name="Li S."/>
            <person name="Ye J."/>
            <person name="Wang L."/>
            <person name="Fang L."/>
            <person name="Lei T."/>
            <person name="Chen C.-S."/>
            <person name="Chen H.-C."/>
            <person name="Xu Z."/>
            <person name="Li H."/>
            <person name="Huang H."/>
            <person name="Zhang F."/>
            <person name="Xu H."/>
            <person name="Li N."/>
            <person name="Zhao C."/>
            <person name="Li S."/>
            <person name="Dong L."/>
            <person name="Huang Y."/>
            <person name="Li L."/>
            <person name="Xi Y."/>
            <person name="Qi Q."/>
            <person name="Li W."/>
            <person name="Zhang B."/>
            <person name="Hu W."/>
            <person name="Zhang Y."/>
            <person name="Tian X."/>
            <person name="Jiao Y."/>
            <person name="Liang X."/>
            <person name="Jin J."/>
            <person name="Gao L."/>
            <person name="Zheng W."/>
            <person name="Hao B."/>
            <person name="Liu S.-M."/>
            <person name="Wang W."/>
            <person name="Yuan L."/>
            <person name="Cao M."/>
            <person name="McDermott J."/>
            <person name="Samudrala R."/>
            <person name="Wang J."/>
            <person name="Wong G.K.-S."/>
            <person name="Yang H."/>
        </authorList>
    </citation>
    <scope>NUCLEOTIDE SEQUENCE [LARGE SCALE GENOMIC DNA]</scope>
    <source>
        <strain>cv. Nipponbare</strain>
    </source>
</reference>
<reference key="6">
    <citation type="journal article" date="2003" name="Science">
        <title>Collection, mapping, and annotation of over 28,000 cDNA clones from japonica rice.</title>
        <authorList>
            <consortium name="The rice full-length cDNA consortium"/>
        </authorList>
    </citation>
    <scope>NUCLEOTIDE SEQUENCE [LARGE SCALE MRNA]</scope>
    <source>
        <strain>cv. Nipponbare</strain>
    </source>
</reference>
<reference key="7">
    <citation type="journal article" date="2005" name="Plant Cell Physiol.">
        <title>Suppression of tiller bud activity in tillering dwarf mutants of rice.</title>
        <authorList>
            <person name="Ishikawa S."/>
            <person name="Maekawa M."/>
            <person name="Arite T."/>
            <person name="Onishi K."/>
            <person name="Takamure I."/>
            <person name="Kyozuka J."/>
        </authorList>
    </citation>
    <scope>DISRUPTION PHENOTYPE</scope>
    <source>
        <strain>cv. Shiokari</strain>
    </source>
</reference>
<reference key="8">
    <citation type="journal article" date="2006" name="Plant J.">
        <title>The rice HIGH-TILLERING DWARF1 encoding an ortholog of Arabidopsis MAX3 is required for negative regulation of the outgrowth of axillary buds.</title>
        <authorList>
            <person name="Zou J."/>
            <person name="Zhang S."/>
            <person name="Zhang W."/>
            <person name="Li G."/>
            <person name="Chen Z."/>
            <person name="Zhai W."/>
            <person name="Zhao X."/>
            <person name="Pan X."/>
            <person name="Xie Q."/>
            <person name="Zhu L."/>
        </authorList>
    </citation>
    <scope>FUNCTION</scope>
    <scope>TISSUE SPECIFICITY</scope>
    <scope>INDUCTION BY AUXIN</scope>
    <scope>DISRUPTION PHENOTYPE</scope>
</reference>
<reference key="9">
    <citation type="journal article" date="2007" name="Plant J.">
        <title>DWARF10, an RMS1/MAX4/DAD1 ortholog, controls lateral bud outgrowth in rice.</title>
        <authorList>
            <person name="Arite T."/>
            <person name="Iwata H."/>
            <person name="Ohshima K."/>
            <person name="Maekawa M."/>
            <person name="Nakajima M."/>
            <person name="Kojima M."/>
            <person name="Sakakibara H."/>
            <person name="Kyozuka J."/>
        </authorList>
    </citation>
    <scope>DISRUPTION PHENOTYPE</scope>
    <source>
        <strain>cv. Shiokari</strain>
    </source>
</reference>
<reference key="10">
    <citation type="journal article" date="2008" name="Nature">
        <title>Inhibition of shoot branching by new terpenoid plant hormones.</title>
        <authorList>
            <person name="Umehara M."/>
            <person name="Hanada A."/>
            <person name="Yoshida S."/>
            <person name="Akiyama K."/>
            <person name="Arite T."/>
            <person name="Takeda-Kamiya N."/>
            <person name="Magome H."/>
            <person name="Kamiya Y."/>
            <person name="Shirasu K."/>
            <person name="Yoneyama K."/>
            <person name="Kyozuka J."/>
            <person name="Yamaguchi S."/>
        </authorList>
    </citation>
    <scope>DISRUPTION PHENOTYPE</scope>
    <source>
        <strain>cv. Shiokari</strain>
    </source>
</reference>
<reference key="11">
    <citation type="journal article" date="2012" name="Science">
        <title>The path from beta-carotene to carlactone, a strigolactone-like plant hormone.</title>
        <authorList>
            <person name="Alder A."/>
            <person name="Jamil M."/>
            <person name="Marzorati M."/>
            <person name="Bruno M."/>
            <person name="Vermathen M."/>
            <person name="Bigler P."/>
            <person name="Ghisla S."/>
            <person name="Bouwmeester H."/>
            <person name="Beyer P."/>
            <person name="Al-Babili S."/>
        </authorList>
    </citation>
    <scope>CATALYTIC ACTIVITY</scope>
</reference>
<reference key="12">
    <citation type="journal article" date="2013" name="Mol. Plant">
        <title>Selective mimics of strigolactone actions and their potential use for controlling damage caused by root parasitic weeds.</title>
        <authorList>
            <person name="Fukui K."/>
            <person name="Ito S."/>
            <person name="Asami T."/>
        </authorList>
    </citation>
    <scope>DISRUPTION PHENOTYPE</scope>
</reference>
<sequence length="609" mass="68188">MATQAIAPMHAAVVHRHHVLPPRRCVRRRGVFVRASAAAAAAAAETDTLSAAFWDYNLLFRSQRDECLDSIPLRVTEGAIPPDFPAGTYYLAGPGIFSDDHGSTVHPLDGHGYLRSFRFRPGDRTIHYSARFVETAAKREESRDGASWRFTHRGPFSVLQGGKKVGNVKVMKNVANTSVLRWGGRLLCLWEGGQPYEVDPRTLETVGPFDLLGLAAADDNKATNASAARRPWLQEAGLDAAARLLRPVLSGVFDMPGKRLLAHYKIDPRRGRLLMVACNAEDMLLPRSHFTFYEFDAHFDLVQKREFVVPDHLMIHDWAFTDTHYILLGNRIKLDIPGSLLALTGTHPMIAALAVDPRRQSTPVYLLPRSPETEAGGRDWSVPIEAPSQMWSVHVGNAFEEANRRGGLDVRLHMSSCSYQWFHFHRMFGYNWHHKKLDPSFMNAAKGKEWLPRLVQVAIELDRTGECRRCSVRRLSDQHARPADFPAINPSYANQRNRFVYAGAASGSRRFLPYFPFDSVVKVDVSDGSARWWSTDGRKFVGEPVFVPTGGGEDGGYVLLVEYAVSKHRCHLVVLDAKKIGTENALVAKLEVPKNLTFPMGFHGFWGDE</sequence>
<keyword id="KW-0150">Chloroplast</keyword>
<keyword id="KW-0223">Dioxygenase</keyword>
<keyword id="KW-0408">Iron</keyword>
<keyword id="KW-0479">Metal-binding</keyword>
<keyword id="KW-0560">Oxidoreductase</keyword>
<keyword id="KW-0934">Plastid</keyword>
<keyword id="KW-1185">Reference proteome</keyword>
<keyword id="KW-0809">Transit peptide</keyword>
<organism>
    <name type="scientific">Oryza sativa subsp. japonica</name>
    <name type="common">Rice</name>
    <dbReference type="NCBI Taxonomy" id="39947"/>
    <lineage>
        <taxon>Eukaryota</taxon>
        <taxon>Viridiplantae</taxon>
        <taxon>Streptophyta</taxon>
        <taxon>Embryophyta</taxon>
        <taxon>Tracheophyta</taxon>
        <taxon>Spermatophyta</taxon>
        <taxon>Magnoliopsida</taxon>
        <taxon>Liliopsida</taxon>
        <taxon>Poales</taxon>
        <taxon>Poaceae</taxon>
        <taxon>BOP clade</taxon>
        <taxon>Oryzoideae</taxon>
        <taxon>Oryzeae</taxon>
        <taxon>Oryzinae</taxon>
        <taxon>Oryza</taxon>
        <taxon>Oryza sativa</taxon>
    </lineage>
</organism>
<protein>
    <recommendedName>
        <fullName>Carotenoid cleavage dioxygenase 7, chloroplastic</fullName>
        <shortName>OsCCD7</shortName>
    </recommendedName>
    <alternativeName>
        <fullName>Beta,beta-carotene 9',10'-oxygenase</fullName>
        <ecNumber>1.13.11.68</ecNumber>
    </alternativeName>
    <alternativeName>
        <fullName>Protein DWARF-17</fullName>
    </alternativeName>
    <alternativeName>
        <fullName>Protein HIGH-TILLERING DWARF 1</fullName>
    </alternativeName>
    <alternativeName>
        <fullName>Protein MAX3 homolog</fullName>
    </alternativeName>
</protein>
<evidence type="ECO:0000250" key="1"/>
<evidence type="ECO:0000255" key="2"/>
<evidence type="ECO:0000269" key="3">
    <source>
    </source>
</evidence>
<evidence type="ECO:0000269" key="4">
    <source>
    </source>
</evidence>
<evidence type="ECO:0000269" key="5">
    <source>
    </source>
</evidence>
<evidence type="ECO:0000269" key="6">
    <source>
    </source>
</evidence>
<evidence type="ECO:0000269" key="7">
    <source>
    </source>
</evidence>
<evidence type="ECO:0000269" key="8">
    <source>
    </source>
</evidence>
<evidence type="ECO:0000305" key="9"/>
<evidence type="ECO:0000305" key="10">
    <source>
    </source>
</evidence>
<feature type="transit peptide" description="Chloroplast" evidence="2">
    <location>
        <begin position="1"/>
        <end position="34"/>
    </location>
</feature>
<feature type="chain" id="PRO_0000422058" description="Carotenoid cleavage dioxygenase 7, chloroplastic">
    <location>
        <begin position="35"/>
        <end position="609"/>
    </location>
</feature>
<feature type="binding site" evidence="1">
    <location>
        <position position="263"/>
    </location>
    <ligand>
        <name>Fe cation</name>
        <dbReference type="ChEBI" id="CHEBI:24875"/>
        <note>catalytic</note>
    </ligand>
</feature>
<feature type="binding site" evidence="1">
    <location>
        <position position="316"/>
    </location>
    <ligand>
        <name>Fe cation</name>
        <dbReference type="ChEBI" id="CHEBI:24875"/>
        <note>catalytic</note>
    </ligand>
</feature>
<feature type="binding site" evidence="1">
    <location>
        <position position="394"/>
    </location>
    <ligand>
        <name>Fe cation</name>
        <dbReference type="ChEBI" id="CHEBI:24875"/>
        <note>catalytic</note>
    </ligand>
</feature>
<feature type="binding site" evidence="1">
    <location>
        <position position="603"/>
    </location>
    <ligand>
        <name>Fe cation</name>
        <dbReference type="ChEBI" id="CHEBI:24875"/>
        <note>catalytic</note>
    </ligand>
</feature>
<feature type="sequence conflict" description="In Ref. 6; AK109771." evidence="9" ref="6">
    <original>H</original>
    <variation>R</variation>
    <location>
        <position position="571"/>
    </location>
</feature>
<proteinExistence type="evidence at protein level"/>
<name>CCD7_ORYSJ</name>
<gene>
    <name type="primary">CCD7</name>
    <name type="synonym">D17</name>
    <name type="synonym">HTD1</name>
    <name type="ordered locus">Os04g0550600</name>
    <name type="ordered locus">LOC_Os04g46470</name>
    <name type="ORF">OsJ_15694</name>
    <name type="ORF">OSJNBb0034G17.9</name>
</gene>